<keyword id="KW-0067">ATP-binding</keyword>
<keyword id="KW-0235">DNA replication</keyword>
<keyword id="KW-0238">DNA-binding</keyword>
<keyword id="KW-0347">Helicase</keyword>
<keyword id="KW-0378">Hydrolase</keyword>
<keyword id="KW-0413">Isomerase</keyword>
<keyword id="KW-0479">Metal-binding</keyword>
<keyword id="KW-0547">Nucleotide-binding</keyword>
<keyword id="KW-0639">Primosome</keyword>
<keyword id="KW-0862">Zinc</keyword>
<dbReference type="EC" id="5.6.2.4" evidence="1"/>
<dbReference type="EMBL" id="AE006914">
    <property type="protein sequence ID" value="AAL03338.1"/>
    <property type="molecule type" value="Genomic_DNA"/>
</dbReference>
<dbReference type="PIR" id="H97799">
    <property type="entry name" value="H97799"/>
</dbReference>
<dbReference type="RefSeq" id="WP_010977412.1">
    <property type="nucleotide sequence ID" value="NC_003103.1"/>
</dbReference>
<dbReference type="SMR" id="Q92HH1"/>
<dbReference type="GeneID" id="927613"/>
<dbReference type="KEGG" id="rco:RC0800"/>
<dbReference type="PATRIC" id="fig|272944.4.peg.909"/>
<dbReference type="HOGENOM" id="CLU_013353_4_0_5"/>
<dbReference type="Proteomes" id="UP000000816">
    <property type="component" value="Chromosome"/>
</dbReference>
<dbReference type="GO" id="GO:1990077">
    <property type="term" value="C:primosome complex"/>
    <property type="evidence" value="ECO:0007669"/>
    <property type="project" value="UniProtKB-UniRule"/>
</dbReference>
<dbReference type="GO" id="GO:0043138">
    <property type="term" value="F:3'-5' DNA helicase activity"/>
    <property type="evidence" value="ECO:0007669"/>
    <property type="project" value="TreeGrafter"/>
</dbReference>
<dbReference type="GO" id="GO:0005524">
    <property type="term" value="F:ATP binding"/>
    <property type="evidence" value="ECO:0007669"/>
    <property type="project" value="UniProtKB-UniRule"/>
</dbReference>
<dbReference type="GO" id="GO:0016887">
    <property type="term" value="F:ATP hydrolysis activity"/>
    <property type="evidence" value="ECO:0007669"/>
    <property type="project" value="RHEA"/>
</dbReference>
<dbReference type="GO" id="GO:0003677">
    <property type="term" value="F:DNA binding"/>
    <property type="evidence" value="ECO:0007669"/>
    <property type="project" value="UniProtKB-UniRule"/>
</dbReference>
<dbReference type="GO" id="GO:0008270">
    <property type="term" value="F:zinc ion binding"/>
    <property type="evidence" value="ECO:0007669"/>
    <property type="project" value="UniProtKB-UniRule"/>
</dbReference>
<dbReference type="GO" id="GO:0006310">
    <property type="term" value="P:DNA recombination"/>
    <property type="evidence" value="ECO:0007669"/>
    <property type="project" value="InterPro"/>
</dbReference>
<dbReference type="GO" id="GO:0006270">
    <property type="term" value="P:DNA replication initiation"/>
    <property type="evidence" value="ECO:0007669"/>
    <property type="project" value="TreeGrafter"/>
</dbReference>
<dbReference type="GO" id="GO:0006269">
    <property type="term" value="P:DNA replication, synthesis of primer"/>
    <property type="evidence" value="ECO:0007669"/>
    <property type="project" value="UniProtKB-KW"/>
</dbReference>
<dbReference type="GO" id="GO:0006302">
    <property type="term" value="P:double-strand break repair"/>
    <property type="evidence" value="ECO:0007669"/>
    <property type="project" value="InterPro"/>
</dbReference>
<dbReference type="CDD" id="cd17929">
    <property type="entry name" value="DEXHc_priA"/>
    <property type="match status" value="1"/>
</dbReference>
<dbReference type="CDD" id="cd18804">
    <property type="entry name" value="SF2_C_priA"/>
    <property type="match status" value="1"/>
</dbReference>
<dbReference type="FunFam" id="3.40.50.300:FF:000489">
    <property type="entry name" value="Primosome assembly protein PriA"/>
    <property type="match status" value="1"/>
</dbReference>
<dbReference type="Gene3D" id="3.40.50.300">
    <property type="entry name" value="P-loop containing nucleotide triphosphate hydrolases"/>
    <property type="match status" value="2"/>
</dbReference>
<dbReference type="Gene3D" id="3.40.1440.60">
    <property type="entry name" value="PriA, 3(prime) DNA-binding domain"/>
    <property type="match status" value="1"/>
</dbReference>
<dbReference type="HAMAP" id="MF_00983">
    <property type="entry name" value="PriA"/>
    <property type="match status" value="1"/>
</dbReference>
<dbReference type="InterPro" id="IPR011545">
    <property type="entry name" value="DEAD/DEAH_box_helicase_dom"/>
</dbReference>
<dbReference type="InterPro" id="IPR014001">
    <property type="entry name" value="Helicase_ATP-bd"/>
</dbReference>
<dbReference type="InterPro" id="IPR001650">
    <property type="entry name" value="Helicase_C-like"/>
</dbReference>
<dbReference type="InterPro" id="IPR027417">
    <property type="entry name" value="P-loop_NTPase"/>
</dbReference>
<dbReference type="InterPro" id="IPR005259">
    <property type="entry name" value="PriA"/>
</dbReference>
<dbReference type="InterPro" id="IPR041222">
    <property type="entry name" value="PriA_3primeBD"/>
</dbReference>
<dbReference type="InterPro" id="IPR042115">
    <property type="entry name" value="PriA_3primeBD_sf"/>
</dbReference>
<dbReference type="InterPro" id="IPR041236">
    <property type="entry name" value="PriA_C"/>
</dbReference>
<dbReference type="InterPro" id="IPR040498">
    <property type="entry name" value="PriA_CRR"/>
</dbReference>
<dbReference type="InterPro" id="IPR050880">
    <property type="entry name" value="PriA_helicase"/>
</dbReference>
<dbReference type="NCBIfam" id="TIGR00595">
    <property type="entry name" value="priA"/>
    <property type="match status" value="1"/>
</dbReference>
<dbReference type="NCBIfam" id="NF004072">
    <property type="entry name" value="PRK05580.2-4"/>
    <property type="match status" value="1"/>
</dbReference>
<dbReference type="PANTHER" id="PTHR30580">
    <property type="entry name" value="PRIMOSOMAL PROTEIN N"/>
    <property type="match status" value="1"/>
</dbReference>
<dbReference type="PANTHER" id="PTHR30580:SF0">
    <property type="entry name" value="PRIMOSOMAL PROTEIN N"/>
    <property type="match status" value="1"/>
</dbReference>
<dbReference type="Pfam" id="PF00270">
    <property type="entry name" value="DEAD"/>
    <property type="match status" value="1"/>
</dbReference>
<dbReference type="Pfam" id="PF00271">
    <property type="entry name" value="Helicase_C"/>
    <property type="match status" value="1"/>
</dbReference>
<dbReference type="Pfam" id="PF17764">
    <property type="entry name" value="PriA_3primeBD"/>
    <property type="match status" value="1"/>
</dbReference>
<dbReference type="Pfam" id="PF18074">
    <property type="entry name" value="PriA_C"/>
    <property type="match status" value="1"/>
</dbReference>
<dbReference type="Pfam" id="PF18319">
    <property type="entry name" value="Zn_ribbon_PriA"/>
    <property type="match status" value="1"/>
</dbReference>
<dbReference type="SMART" id="SM00487">
    <property type="entry name" value="DEXDc"/>
    <property type="match status" value="1"/>
</dbReference>
<dbReference type="SMART" id="SM00490">
    <property type="entry name" value="HELICc"/>
    <property type="match status" value="1"/>
</dbReference>
<dbReference type="SUPFAM" id="SSF52540">
    <property type="entry name" value="P-loop containing nucleoside triphosphate hydrolases"/>
    <property type="match status" value="2"/>
</dbReference>
<dbReference type="PROSITE" id="PS51192">
    <property type="entry name" value="HELICASE_ATP_BIND_1"/>
    <property type="match status" value="1"/>
</dbReference>
<dbReference type="PROSITE" id="PS51194">
    <property type="entry name" value="HELICASE_CTER"/>
    <property type="match status" value="1"/>
</dbReference>
<gene>
    <name evidence="1" type="primary">priA</name>
    <name type="ordered locus">RC0800</name>
</gene>
<organism>
    <name type="scientific">Rickettsia conorii (strain ATCC VR-613 / Malish 7)</name>
    <dbReference type="NCBI Taxonomy" id="272944"/>
    <lineage>
        <taxon>Bacteria</taxon>
        <taxon>Pseudomonadati</taxon>
        <taxon>Pseudomonadota</taxon>
        <taxon>Alphaproteobacteria</taxon>
        <taxon>Rickettsiales</taxon>
        <taxon>Rickettsiaceae</taxon>
        <taxon>Rickettsieae</taxon>
        <taxon>Rickettsia</taxon>
        <taxon>spotted fever group</taxon>
    </lineage>
</organism>
<comment type="function">
    <text evidence="1">Initiates the restart of stalled replication forks, which reloads the replicative helicase on sites other than the origin of replication. Recognizes and binds to abandoned replication forks and remodels them to uncover a helicase loading site. Promotes assembly of the primosome at these replication forks.</text>
</comment>
<comment type="catalytic activity">
    <reaction evidence="1">
        <text>Couples ATP hydrolysis with the unwinding of duplex DNA by translocating in the 3'-5' direction.</text>
        <dbReference type="EC" id="5.6.2.4"/>
    </reaction>
</comment>
<comment type="catalytic activity">
    <reaction evidence="1">
        <text>ATP + H2O = ADP + phosphate + H(+)</text>
        <dbReference type="Rhea" id="RHEA:13065"/>
        <dbReference type="ChEBI" id="CHEBI:15377"/>
        <dbReference type="ChEBI" id="CHEBI:15378"/>
        <dbReference type="ChEBI" id="CHEBI:30616"/>
        <dbReference type="ChEBI" id="CHEBI:43474"/>
        <dbReference type="ChEBI" id="CHEBI:456216"/>
        <dbReference type="EC" id="5.6.2.4"/>
    </reaction>
</comment>
<comment type="cofactor">
    <cofactor evidence="1">
        <name>Zn(2+)</name>
        <dbReference type="ChEBI" id="CHEBI:29105"/>
    </cofactor>
    <text evidence="1">Binds 2 zinc ions per subunit.</text>
</comment>
<comment type="subunit">
    <text evidence="1">Component of the replication restart primosome.</text>
</comment>
<comment type="similarity">
    <text evidence="1">Belongs to the helicase family. PriA subfamily.</text>
</comment>
<protein>
    <recommendedName>
        <fullName evidence="1">Replication restart protein PriA</fullName>
    </recommendedName>
    <alternativeName>
        <fullName evidence="1">ATP-dependent DNA helicase PriA</fullName>
        <ecNumber evidence="1">5.6.2.4</ecNumber>
    </alternativeName>
    <alternativeName>
        <fullName evidence="1">DNA 3'-5' helicase PriA</fullName>
    </alternativeName>
</protein>
<sequence length="648" mass="72949">MRIAKILLPVAKLFPLDYLIPEDLELNIGDLVVVPFRNKELTGIVWELVSNSEAKKIKTIRVKVPLNLNITSEVLELIKWMSSYYMSELGSIAKLVLPMDIAEKPIKVKEQKVNNNFVLPDLSEEQKQAVTILNESNKPTLVKGVTGSGKTEIYFHLIADYLAKGKQVLVMLPEIALSTQIINRFIERFGFEPIIWNSSVTKAHKKMILRGILSDKVKVVIGARSSLFLPFKNLGLIVIDEEHDDSYKQDDGILYNARDTAIVRGTFDKAQIVLCSATPSIETIHNIEIGKYQLVTLVNRYKNVDLPNIEIIDMTKEKLSKNSYLSKLLIEAIKGNLDNKKQVLLFLNRRGYAPLMLCKACGYRLTCKFCSSWMVVHKATKKLECHHCGYQSKIFSSCPECLEDETLTICGPGIERIEEEAKALFPESKIAVISKDHAKSPEKIAQLLHQMENLEIDILIGTQIITKGYHFPNLTLVGVIDADLGSNNADLRASERTFQLLHQVGGRAGRGDSKGVVYLQSYYPDNTIFSYVKAGDEDSFFANELEIRKSADMPPFSKTASVILSGSSEAKILEIARDMVRIAPKANVKILGPASSLMSKLAGKYRYRILIIANKKFNLQKYLKFWLSLIKIPSFCHLKIDIDPKSFY</sequence>
<reference key="1">
    <citation type="journal article" date="2001" name="Science">
        <title>Mechanisms of evolution in Rickettsia conorii and R. prowazekii.</title>
        <authorList>
            <person name="Ogata H."/>
            <person name="Audic S."/>
            <person name="Renesto-Audiffren P."/>
            <person name="Fournier P.-E."/>
            <person name="Barbe V."/>
            <person name="Samson D."/>
            <person name="Roux V."/>
            <person name="Cossart P."/>
            <person name="Weissenbach J."/>
            <person name="Claverie J.-M."/>
            <person name="Raoult D."/>
        </authorList>
    </citation>
    <scope>NUCLEOTIDE SEQUENCE [LARGE SCALE GENOMIC DNA]</scope>
    <source>
        <strain>ATCC VR-613 / Malish 7</strain>
    </source>
</reference>
<proteinExistence type="inferred from homology"/>
<accession>Q92HH1</accession>
<name>PRIA_RICCN</name>
<evidence type="ECO:0000255" key="1">
    <source>
        <dbReference type="HAMAP-Rule" id="MF_00983"/>
    </source>
</evidence>
<feature type="chain" id="PRO_0000102131" description="Replication restart protein PriA">
    <location>
        <begin position="1"/>
        <end position="648"/>
    </location>
</feature>
<feature type="domain" description="Helicase ATP-binding" evidence="1">
    <location>
        <begin position="131"/>
        <end position="297"/>
    </location>
</feature>
<feature type="domain" description="Helicase C-terminal" evidence="1">
    <location>
        <begin position="393"/>
        <end position="548"/>
    </location>
</feature>
<feature type="short sequence motif" description="DEAH box" evidence="1">
    <location>
        <begin position="240"/>
        <end position="243"/>
    </location>
</feature>
<feature type="binding site" evidence="1">
    <location>
        <begin position="144"/>
        <end position="151"/>
    </location>
    <ligand>
        <name>ATP</name>
        <dbReference type="ChEBI" id="CHEBI:30616"/>
    </ligand>
</feature>
<feature type="binding site" evidence="1">
    <location>
        <position position="358"/>
    </location>
    <ligand>
        <name>Zn(2+)</name>
        <dbReference type="ChEBI" id="CHEBI:29105"/>
        <label>1</label>
    </ligand>
</feature>
<feature type="binding site" evidence="1">
    <location>
        <position position="361"/>
    </location>
    <ligand>
        <name>Zn(2+)</name>
        <dbReference type="ChEBI" id="CHEBI:29105"/>
        <label>1</label>
    </ligand>
</feature>
<feature type="binding site" evidence="1">
    <location>
        <position position="367"/>
    </location>
    <ligand>
        <name>Zn(2+)</name>
        <dbReference type="ChEBI" id="CHEBI:29105"/>
        <label>2</label>
    </ligand>
</feature>
<feature type="binding site" evidence="1">
    <location>
        <position position="370"/>
    </location>
    <ligand>
        <name>Zn(2+)</name>
        <dbReference type="ChEBI" id="CHEBI:29105"/>
        <label>2</label>
    </ligand>
</feature>
<feature type="binding site" evidence="1">
    <location>
        <position position="385"/>
    </location>
    <ligand>
        <name>Zn(2+)</name>
        <dbReference type="ChEBI" id="CHEBI:29105"/>
        <label>2</label>
    </ligand>
</feature>
<feature type="binding site" evidence="1">
    <location>
        <position position="388"/>
    </location>
    <ligand>
        <name>Zn(2+)</name>
        <dbReference type="ChEBI" id="CHEBI:29105"/>
        <label>2</label>
    </ligand>
</feature>
<feature type="binding site" evidence="1">
    <location>
        <position position="398"/>
    </location>
    <ligand>
        <name>Zn(2+)</name>
        <dbReference type="ChEBI" id="CHEBI:29105"/>
        <label>1</label>
    </ligand>
</feature>
<feature type="binding site" evidence="1">
    <location>
        <position position="401"/>
    </location>
    <ligand>
        <name>Zn(2+)</name>
        <dbReference type="ChEBI" id="CHEBI:29105"/>
        <label>1</label>
    </ligand>
</feature>